<proteinExistence type="evidence at transcript level"/>
<organism>
    <name type="scientific">Pongo abelii</name>
    <name type="common">Sumatran orangutan</name>
    <name type="synonym">Pongo pygmaeus abelii</name>
    <dbReference type="NCBI Taxonomy" id="9601"/>
    <lineage>
        <taxon>Eukaryota</taxon>
        <taxon>Metazoa</taxon>
        <taxon>Chordata</taxon>
        <taxon>Craniata</taxon>
        <taxon>Vertebrata</taxon>
        <taxon>Euteleostomi</taxon>
        <taxon>Mammalia</taxon>
        <taxon>Eutheria</taxon>
        <taxon>Euarchontoglires</taxon>
        <taxon>Primates</taxon>
        <taxon>Haplorrhini</taxon>
        <taxon>Catarrhini</taxon>
        <taxon>Hominidae</taxon>
        <taxon>Pongo</taxon>
    </lineage>
</organism>
<feature type="signal peptide" evidence="1">
    <location>
        <begin position="1"/>
        <end position="19"/>
    </location>
</feature>
<feature type="chain" id="PRO_0000022315" description="Selenoprotein P">
    <location>
        <begin position="20"/>
        <end position="381"/>
    </location>
</feature>
<feature type="region of interest" description="Disordered" evidence="5">
    <location>
        <begin position="202"/>
        <end position="268"/>
    </location>
</feature>
<feature type="region of interest" description="Disordered" evidence="5">
    <location>
        <begin position="352"/>
        <end position="381"/>
    </location>
</feature>
<feature type="compositionally biased region" description="Basic residues" evidence="5">
    <location>
        <begin position="204"/>
        <end position="217"/>
    </location>
</feature>
<feature type="compositionally biased region" description="Polar residues" evidence="5">
    <location>
        <begin position="218"/>
        <end position="229"/>
    </location>
</feature>
<feature type="compositionally biased region" description="Basic residues" evidence="5">
    <location>
        <begin position="243"/>
        <end position="255"/>
    </location>
</feature>
<feature type="compositionally biased region" description="Polar residues" evidence="5">
    <location>
        <begin position="353"/>
        <end position="369"/>
    </location>
</feature>
<feature type="non-standard amino acid" description="Selenocysteine">
    <location>
        <position position="59"/>
    </location>
</feature>
<feature type="non-standard amino acid" description="Selenocysteine">
    <location>
        <position position="318"/>
    </location>
</feature>
<feature type="non-standard amino acid" description="Selenocysteine">
    <location>
        <position position="330"/>
    </location>
</feature>
<feature type="non-standard amino acid" description="Selenocysteine">
    <location>
        <position position="345"/>
    </location>
</feature>
<feature type="non-standard amino acid" description="Selenocysteine">
    <location>
        <position position="352"/>
    </location>
</feature>
<feature type="non-standard amino acid" description="Selenocysteine">
    <location>
        <position position="367"/>
    </location>
</feature>
<feature type="non-standard amino acid" description="Selenocysteine">
    <location>
        <position position="369"/>
    </location>
</feature>
<feature type="non-standard amino acid" description="Selenocysteine">
    <location>
        <position position="376"/>
    </location>
</feature>
<feature type="non-standard amino acid" description="Selenocysteine">
    <location>
        <position position="378"/>
    </location>
</feature>
<feature type="modified residue" description="Phosphoserine" evidence="2">
    <location>
        <position position="266"/>
    </location>
</feature>
<feature type="glycosylation site" description="N-linked (GlcNAc...) asparagine" evidence="4">
    <location>
        <position position="46"/>
    </location>
</feature>
<feature type="glycosylation site" description="N-linked (GlcNAc...) asparagine" evidence="4">
    <location>
        <position position="83"/>
    </location>
</feature>
<feature type="glycosylation site" description="N-linked (GlcNAc...) asparagine" evidence="4">
    <location>
        <position position="119"/>
    </location>
</feature>
<feature type="glycosylation site" description="N-linked (GlcNAc...) asparagine" evidence="4">
    <location>
        <position position="128"/>
    </location>
</feature>
<feature type="glycosylation site" description="N-linked (GlcNAc...) asparagine" evidence="4">
    <location>
        <position position="338"/>
    </location>
</feature>
<gene>
    <name evidence="2" type="primary">SELENOP</name>
</gene>
<accession>Q5R8W9</accession>
<keyword id="KW-0325">Glycoprotein</keyword>
<keyword id="KW-0597">Phosphoprotein</keyword>
<keyword id="KW-1185">Reference proteome</keyword>
<keyword id="KW-0964">Secreted</keyword>
<keyword id="KW-0711">Selenium</keyword>
<keyword id="KW-0712">Selenocysteine</keyword>
<keyword id="KW-0732">Signal</keyword>
<evidence type="ECO:0000250" key="1"/>
<evidence type="ECO:0000250" key="2">
    <source>
        <dbReference type="UniProtKB" id="P49908"/>
    </source>
</evidence>
<evidence type="ECO:0000250" key="3">
    <source>
        <dbReference type="UniProtKB" id="P70274"/>
    </source>
</evidence>
<evidence type="ECO:0000255" key="4"/>
<evidence type="ECO:0000256" key="5">
    <source>
        <dbReference type="SAM" id="MobiDB-lite"/>
    </source>
</evidence>
<evidence type="ECO:0000305" key="6"/>
<comment type="function">
    <text evidence="1">Might be responsible for some of the extracellular antioxidant defense properties of selenium or might be involved in the transport of selenium. May supply selenium to tissues such as brain and testis (By similarity).</text>
</comment>
<comment type="subcellular location">
    <subcellularLocation>
        <location evidence="3">Secreted</location>
    </subcellularLocation>
    <text evidence="3">Passes from plasma into the glomerular filtrate where it is removed by endocytosis mediated by LRP2 in the proximal tubule epithelium.</text>
</comment>
<comment type="domain">
    <text evidence="3">The C-terminus is not required for endocytic uptake in the proximal tubule epithelium.</text>
</comment>
<comment type="PTM">
    <text evidence="1">Phosphorylation sites are present in the extracellular medium.</text>
</comment>
<comment type="similarity">
    <text evidence="6">Belongs to the selenoprotein P family.</text>
</comment>
<sequence length="381" mass="43174">MWRSLGLALALCLLPLGGTESQDQSSLCKQPPAWSIRDQGPMLNSNGSVTVVALLQASUYLCILQASKLEDLRVKLKKEGYSNISHIVVNHQGISSRLKYTHLKNKVSEHIPVYQQEENQTDVWTLLNGSKDDFLIYDRCGRLVYHLGLPFSFLTFPYVEEAVKIAYCEKKCGYCSLTTLKDEDFCKSVSLATVDKTVEAPSPHYHHEHHHNHRHQHLGSSELSENQQPGAPDAPTHPAPPGLHHHHKHKGQHRQGHPENRDMPGSEDIQDLQKKLCRKRCINQLLCKLPKDSELAPRSCCCHCRHLIFEKTGSAITUQCKENLPSLCSUQGLRAEENITESCQURLPPPAUQISQQLIPTEASTSURUKNQAKKUEUPSN</sequence>
<name>SEPP1_PONAB</name>
<protein>
    <recommendedName>
        <fullName evidence="2">Selenoprotein P</fullName>
        <shortName>SeP</shortName>
    </recommendedName>
</protein>
<reference key="1">
    <citation type="submission" date="2004-11" db="EMBL/GenBank/DDBJ databases">
        <authorList>
            <consortium name="The German cDNA consortium"/>
        </authorList>
    </citation>
    <scope>NUCLEOTIDE SEQUENCE [LARGE SCALE MRNA]</scope>
    <source>
        <tissue>Brain cortex</tissue>
    </source>
</reference>
<dbReference type="EMBL" id="CR859629">
    <property type="protein sequence ID" value="CAH91791.1"/>
    <property type="molecule type" value="mRNA"/>
</dbReference>
<dbReference type="RefSeq" id="NP_001127462.1">
    <property type="nucleotide sequence ID" value="NM_001133990.1"/>
</dbReference>
<dbReference type="FunCoup" id="Q5R8W9">
    <property type="interactions" value="70"/>
</dbReference>
<dbReference type="GlyCosmos" id="Q5R8W9">
    <property type="glycosylation" value="5 sites, No reported glycans"/>
</dbReference>
<dbReference type="GeneID" id="100174535"/>
<dbReference type="KEGG" id="pon:100174535"/>
<dbReference type="CTD" id="6414"/>
<dbReference type="eggNOG" id="ENOG502QWRU">
    <property type="taxonomic scope" value="Eukaryota"/>
</dbReference>
<dbReference type="InParanoid" id="Q5R8W9"/>
<dbReference type="OrthoDB" id="6134775at2759"/>
<dbReference type="Proteomes" id="UP000001595">
    <property type="component" value="Unplaced"/>
</dbReference>
<dbReference type="GO" id="GO:0005576">
    <property type="term" value="C:extracellular region"/>
    <property type="evidence" value="ECO:0007669"/>
    <property type="project" value="UniProtKB-SubCell"/>
</dbReference>
<dbReference type="GO" id="GO:0008430">
    <property type="term" value="F:selenium binding"/>
    <property type="evidence" value="ECO:0007669"/>
    <property type="project" value="InterPro"/>
</dbReference>
<dbReference type="GO" id="GO:0001887">
    <property type="term" value="P:selenium compound metabolic process"/>
    <property type="evidence" value="ECO:0007669"/>
    <property type="project" value="TreeGrafter"/>
</dbReference>
<dbReference type="InterPro" id="IPR007671">
    <property type="entry name" value="Selenoprotein-P_N"/>
</dbReference>
<dbReference type="InterPro" id="IPR007672">
    <property type="entry name" value="SelP_C"/>
</dbReference>
<dbReference type="InterPro" id="IPR037941">
    <property type="entry name" value="SeP"/>
</dbReference>
<dbReference type="PANTHER" id="PTHR10105">
    <property type="entry name" value="SELENOPROTEIN P"/>
    <property type="match status" value="1"/>
</dbReference>
<dbReference type="PANTHER" id="PTHR10105:SF3">
    <property type="entry name" value="SELENOPROTEIN P"/>
    <property type="match status" value="1"/>
</dbReference>
<dbReference type="Pfam" id="PF04593">
    <property type="entry name" value="SelP_C"/>
    <property type="match status" value="1"/>
</dbReference>
<dbReference type="Pfam" id="PF04592">
    <property type="entry name" value="SelP_N"/>
    <property type="match status" value="1"/>
</dbReference>